<organism>
    <name type="scientific">Oryctolagus cuniculus</name>
    <name type="common">Rabbit</name>
    <dbReference type="NCBI Taxonomy" id="9986"/>
    <lineage>
        <taxon>Eukaryota</taxon>
        <taxon>Metazoa</taxon>
        <taxon>Chordata</taxon>
        <taxon>Craniata</taxon>
        <taxon>Vertebrata</taxon>
        <taxon>Euteleostomi</taxon>
        <taxon>Mammalia</taxon>
        <taxon>Eutheria</taxon>
        <taxon>Euarchontoglires</taxon>
        <taxon>Glires</taxon>
        <taxon>Lagomorpha</taxon>
        <taxon>Leporidae</taxon>
        <taxon>Oryctolagus</taxon>
    </lineage>
</organism>
<proteinExistence type="evidence at transcript level"/>
<name>LPXN_RABIT</name>
<accession>Q9N261</accession>
<accession>G1TMN6</accession>
<keyword id="KW-0007">Acetylation</keyword>
<keyword id="KW-0010">Activator</keyword>
<keyword id="KW-0130">Cell adhesion</keyword>
<keyword id="KW-0965">Cell junction</keyword>
<keyword id="KW-1003">Cell membrane</keyword>
<keyword id="KW-0966">Cell projection</keyword>
<keyword id="KW-0963">Cytoplasm</keyword>
<keyword id="KW-0440">LIM domain</keyword>
<keyword id="KW-0472">Membrane</keyword>
<keyword id="KW-0479">Metal-binding</keyword>
<keyword id="KW-0539">Nucleus</keyword>
<keyword id="KW-0597">Phosphoprotein</keyword>
<keyword id="KW-1185">Reference proteome</keyword>
<keyword id="KW-0677">Repeat</keyword>
<keyword id="KW-0804">Transcription</keyword>
<keyword id="KW-0805">Transcription regulation</keyword>
<keyword id="KW-0862">Zinc</keyword>
<dbReference type="EMBL" id="AF118146">
    <property type="protein sequence ID" value="AAF37382.1"/>
    <property type="molecule type" value="mRNA"/>
</dbReference>
<dbReference type="EMBL" id="AAGW02038189">
    <property type="status" value="NOT_ANNOTATED_CDS"/>
    <property type="molecule type" value="Genomic_DNA"/>
</dbReference>
<dbReference type="EMBL" id="AAGW02038190">
    <property type="status" value="NOT_ANNOTATED_CDS"/>
    <property type="molecule type" value="Genomic_DNA"/>
</dbReference>
<dbReference type="EMBL" id="AAGW02038191">
    <property type="status" value="NOT_ANNOTATED_CDS"/>
    <property type="molecule type" value="Genomic_DNA"/>
</dbReference>
<dbReference type="EMBL" id="AAGW02038192">
    <property type="status" value="NOT_ANNOTATED_CDS"/>
    <property type="molecule type" value="Genomic_DNA"/>
</dbReference>
<dbReference type="EMBL" id="AAGW02038193">
    <property type="status" value="NOT_ANNOTATED_CDS"/>
    <property type="molecule type" value="Genomic_DNA"/>
</dbReference>
<dbReference type="RefSeq" id="NP_001075517.1">
    <property type="nucleotide sequence ID" value="NM_001082048.1"/>
</dbReference>
<dbReference type="RefSeq" id="XP_051689920.2">
    <property type="nucleotide sequence ID" value="XM_051833960.2"/>
</dbReference>
<dbReference type="SMR" id="Q9N261"/>
<dbReference type="FunCoup" id="Q9N261">
    <property type="interactions" value="91"/>
</dbReference>
<dbReference type="STRING" id="9986.ENSOCUP00000018247"/>
<dbReference type="PaxDb" id="9986-ENSOCUP00000021842"/>
<dbReference type="GeneID" id="100008712"/>
<dbReference type="KEGG" id="ocu:100008712"/>
<dbReference type="CTD" id="9404"/>
<dbReference type="eggNOG" id="KOG1703">
    <property type="taxonomic scope" value="Eukaryota"/>
</dbReference>
<dbReference type="InParanoid" id="Q9N261"/>
<dbReference type="OrthoDB" id="15567at2759"/>
<dbReference type="Proteomes" id="UP000001811">
    <property type="component" value="Unplaced"/>
</dbReference>
<dbReference type="GO" id="GO:0042995">
    <property type="term" value="C:cell projection"/>
    <property type="evidence" value="ECO:0007669"/>
    <property type="project" value="UniProtKB-KW"/>
</dbReference>
<dbReference type="GO" id="GO:0005925">
    <property type="term" value="C:focal adhesion"/>
    <property type="evidence" value="ECO:0007669"/>
    <property type="project" value="UniProtKB-SubCell"/>
</dbReference>
<dbReference type="GO" id="GO:0005634">
    <property type="term" value="C:nucleus"/>
    <property type="evidence" value="ECO:0007669"/>
    <property type="project" value="UniProtKB-SubCell"/>
</dbReference>
<dbReference type="GO" id="GO:0048471">
    <property type="term" value="C:perinuclear region of cytoplasm"/>
    <property type="evidence" value="ECO:0007669"/>
    <property type="project" value="UniProtKB-SubCell"/>
</dbReference>
<dbReference type="GO" id="GO:0005886">
    <property type="term" value="C:plasma membrane"/>
    <property type="evidence" value="ECO:0007669"/>
    <property type="project" value="UniProtKB-SubCell"/>
</dbReference>
<dbReference type="GO" id="GO:0002102">
    <property type="term" value="C:podosome"/>
    <property type="evidence" value="ECO:0007669"/>
    <property type="project" value="UniProtKB-SubCell"/>
</dbReference>
<dbReference type="GO" id="GO:0046872">
    <property type="term" value="F:metal ion binding"/>
    <property type="evidence" value="ECO:0007669"/>
    <property type="project" value="UniProtKB-KW"/>
</dbReference>
<dbReference type="GO" id="GO:0043542">
    <property type="term" value="P:endothelial cell migration"/>
    <property type="evidence" value="ECO:0007669"/>
    <property type="project" value="TreeGrafter"/>
</dbReference>
<dbReference type="GO" id="GO:0050859">
    <property type="term" value="P:negative regulation of B cell receptor signaling pathway"/>
    <property type="evidence" value="ECO:0007669"/>
    <property type="project" value="TreeGrafter"/>
</dbReference>
<dbReference type="GO" id="GO:0034446">
    <property type="term" value="P:substrate adhesion-dependent cell spreading"/>
    <property type="evidence" value="ECO:0007669"/>
    <property type="project" value="TreeGrafter"/>
</dbReference>
<dbReference type="GO" id="GO:0007179">
    <property type="term" value="P:transforming growth factor beta receptor signaling pathway"/>
    <property type="evidence" value="ECO:0007669"/>
    <property type="project" value="TreeGrafter"/>
</dbReference>
<dbReference type="CDD" id="cd09408">
    <property type="entry name" value="LIM2_Leupaxin"/>
    <property type="match status" value="1"/>
</dbReference>
<dbReference type="CDD" id="cd09339">
    <property type="entry name" value="LIM4_Paxillin_like"/>
    <property type="match status" value="1"/>
</dbReference>
<dbReference type="FunFam" id="2.10.110.10:FF:000008">
    <property type="entry name" value="Paxillin isoform 1"/>
    <property type="match status" value="1"/>
</dbReference>
<dbReference type="FunFam" id="2.10.110.10:FF:000009">
    <property type="entry name" value="Paxillin isoform 1"/>
    <property type="match status" value="1"/>
</dbReference>
<dbReference type="FunFam" id="2.10.110.10:FF:000012">
    <property type="entry name" value="Paxillin isoform 1"/>
    <property type="match status" value="1"/>
</dbReference>
<dbReference type="FunFam" id="2.10.110.10:FF:000018">
    <property type="entry name" value="Paxillin isoform 1"/>
    <property type="match status" value="1"/>
</dbReference>
<dbReference type="Gene3D" id="2.10.110.10">
    <property type="entry name" value="Cysteine Rich Protein"/>
    <property type="match status" value="4"/>
</dbReference>
<dbReference type="InterPro" id="IPR017305">
    <property type="entry name" value="Tgfb1i1/Leupaxin/TGFB1I1"/>
</dbReference>
<dbReference type="InterPro" id="IPR001781">
    <property type="entry name" value="Znf_LIM"/>
</dbReference>
<dbReference type="PANTHER" id="PTHR24216:SF23">
    <property type="entry name" value="LEUPAXIN"/>
    <property type="match status" value="1"/>
</dbReference>
<dbReference type="PANTHER" id="PTHR24216">
    <property type="entry name" value="PAXILLIN-RELATED"/>
    <property type="match status" value="1"/>
</dbReference>
<dbReference type="Pfam" id="PF00412">
    <property type="entry name" value="LIM"/>
    <property type="match status" value="4"/>
</dbReference>
<dbReference type="PIRSF" id="PIRSF037881">
    <property type="entry name" value="Leupaxin"/>
    <property type="match status" value="1"/>
</dbReference>
<dbReference type="SMART" id="SM00132">
    <property type="entry name" value="LIM"/>
    <property type="match status" value="4"/>
</dbReference>
<dbReference type="SUPFAM" id="SSF57716">
    <property type="entry name" value="Glucocorticoid receptor-like (DNA-binding domain)"/>
    <property type="match status" value="5"/>
</dbReference>
<dbReference type="PROSITE" id="PS00478">
    <property type="entry name" value="LIM_DOMAIN_1"/>
    <property type="match status" value="4"/>
</dbReference>
<dbReference type="PROSITE" id="PS50023">
    <property type="entry name" value="LIM_DOMAIN_2"/>
    <property type="match status" value="4"/>
</dbReference>
<comment type="function">
    <text evidence="1">Transcriptional coactivator for androgen receptor (AR) and serum response factor (SRF). Contributes to the regulation of cell adhesion, spreading and cell migration and acts as a negative regulator in integrin-mediated cell adhesion events. Suppresses the integrin-induced tyrosine phosphorylation of paxillin (PXN). May play a critical role as an adapter protein in the formation of the adhesion zone in osteoclasts. Negatively regulates B-cell antigen receptor (BCR) signaling (By similarity).</text>
</comment>
<comment type="subunit">
    <text evidence="1">Interacts with unphosphorylated ITGA4. Interacts with AR and SRF (By similarity). Interacts with PTK2B/PYK2, PTPN22 and PTPN12. Interacts (via LD motif 3) with LYN and the interaction is induced upon B-cell antigen receptor (BCR) activation. Interacts (via LD motif 3) with PTK2/FAK (By similarity).</text>
</comment>
<comment type="subcellular location">
    <subcellularLocation>
        <location evidence="1">Cytoplasm</location>
    </subcellularLocation>
    <subcellularLocation>
        <location evidence="1">Cell junction</location>
        <location evidence="1">Focal adhesion</location>
    </subcellularLocation>
    <subcellularLocation>
        <location evidence="1">Nucleus</location>
    </subcellularLocation>
    <subcellularLocation>
        <location evidence="1">Cytoplasm</location>
        <location evidence="1">Perinuclear region</location>
    </subcellularLocation>
    <subcellularLocation>
        <location evidence="1">Cell projection</location>
        <location evidence="1">Podosome</location>
    </subcellularLocation>
    <subcellularLocation>
        <location evidence="1">Cell membrane</location>
    </subcellularLocation>
    <text evidence="1">Shuttles between the cytoplasm and nucleus. Recruited to the cell membrane following B-cell antigen receptor (BCR) cross-linking in B-cells. Enhanced focal adhesion kinase activity (PTK2/FAK) attenuates its nuclear accumulation and limits its ability to enhance serum response factor (SRF)-dependent gene transcription. Targeting to focal adhesions is essential for its tyrosine phosphorylation in response to bombesin (By similarity).</text>
</comment>
<comment type="domain">
    <text evidence="1">The LIM domain 3 is critical for focal adhesion targeting and the suppression of paxillin (PXN) tyrosine phosphorylation. The LIM domain 3 alone or both LIM domains 3 and 4 can mediate interaction with AR (By similarity).</text>
</comment>
<comment type="PTM">
    <text evidence="1">Phosphorylated on tyrosine residues. Phosphorylation on Tyr-72 is important for its inhibitory function. Bombesin stimulates phosphorylation on Tyr-22, Tyr-62 and Tyr-72 (By similarity).</text>
</comment>
<comment type="similarity">
    <text evidence="5">Belongs to the paxillin family.</text>
</comment>
<sequence length="386" mass="43318">MEELDALLEELERSTLQDSDEYSNSAPLPLDQSSRKESNLDETSKMLSVQDSTNPFPVQLVYTTNIQDRNVYSEVQEPKKSPPPAKTSAAAQLDELMAHLSEMQAKVSVKADAGKKPVSENLDHKASLDSMLGGLEQELQNLGIPTVPKGHCASCQKPIVGKVIHALGQSWHPEHFICTHCKEEIGSSPFFERSGLAYCPKDYHHLFSPRCAYCAAPILDKVLTAMNQTWHPEHFFCSHCGEVFGTEGFHEKDKKPYCRKDFLAMFSPKCGGCNRPVLENYLSAMNTVWHPECFVCGDCFSSFSTGSFFELEGRPFCELHYHQRRGTLCHGCGQPITGRCISAMGHKFHPEHFVCAFCLTQLSKGVFREQNDKTYCQPCFNKLFSL</sequence>
<protein>
    <recommendedName>
        <fullName>Leupaxin</fullName>
    </recommendedName>
</protein>
<reference key="1">
    <citation type="journal article" date="2003" name="J. Bone Miner. Res.">
        <title>Leupaxin is a critical adaptor protein in the adhesion zone of the osteoclast.</title>
        <authorList>
            <person name="Gupta A."/>
            <person name="Lee B.S."/>
            <person name="Khadeer M.A."/>
            <person name="Tang Z."/>
            <person name="Chellaiah M."/>
            <person name="Abu-Amer Y."/>
            <person name="Goldknopf J."/>
            <person name="Hruska K.A."/>
        </authorList>
    </citation>
    <scope>NUCLEOTIDE SEQUENCE [MRNA]</scope>
</reference>
<reference key="2">
    <citation type="submission" date="2009-08" db="EMBL/GenBank/DDBJ databases">
        <title>Genome Sequence of Oryctolagus cuniculus (European rabbit).</title>
        <authorList>
            <consortium name="The Genome Sequencing Platform"/>
            <person name="Di Palma F."/>
            <person name="Heiman D."/>
            <person name="Young S."/>
            <person name="Gnerre S."/>
            <person name="Johnson J."/>
            <person name="Lander E.S."/>
            <person name="Lindblad-Toh K."/>
        </authorList>
    </citation>
    <scope>NUCLEOTIDE SEQUENCE [LARGE SCALE GENOMIC DNA]</scope>
    <source>
        <strain>Thorbecke</strain>
    </source>
</reference>
<gene>
    <name type="primary">LPXN</name>
</gene>
<evidence type="ECO:0000250" key="1"/>
<evidence type="ECO:0000250" key="2">
    <source>
        <dbReference type="UniProtKB" id="O60711"/>
    </source>
</evidence>
<evidence type="ECO:0000255" key="3">
    <source>
        <dbReference type="PROSITE-ProRule" id="PRU00125"/>
    </source>
</evidence>
<evidence type="ECO:0000256" key="4">
    <source>
        <dbReference type="SAM" id="MobiDB-lite"/>
    </source>
</evidence>
<evidence type="ECO:0000305" key="5"/>
<feature type="chain" id="PRO_0000416038" description="Leupaxin">
    <location>
        <begin position="1"/>
        <end position="386"/>
    </location>
</feature>
<feature type="domain" description="LIM zinc-binding 1" evidence="3">
    <location>
        <begin position="150"/>
        <end position="209"/>
    </location>
</feature>
<feature type="domain" description="LIM zinc-binding 2" evidence="3">
    <location>
        <begin position="210"/>
        <end position="267"/>
    </location>
</feature>
<feature type="domain" description="LIM zinc-binding 3" evidence="3">
    <location>
        <begin position="268"/>
        <end position="327"/>
    </location>
</feature>
<feature type="domain" description="LIM zinc-binding 4" evidence="3">
    <location>
        <begin position="328"/>
        <end position="386"/>
    </location>
</feature>
<feature type="region of interest" description="Disordered" evidence="4">
    <location>
        <begin position="12"/>
        <end position="51"/>
    </location>
</feature>
<feature type="short sequence motif" description="LD motif 1">
    <location>
        <begin position="3"/>
        <end position="15"/>
    </location>
</feature>
<feature type="short sequence motif" description="LD motif 2">
    <location>
        <begin position="70"/>
        <end position="82"/>
    </location>
</feature>
<feature type="short sequence motif" description="LD motif 3">
    <location>
        <begin position="92"/>
        <end position="103"/>
    </location>
</feature>
<feature type="compositionally biased region" description="Polar residues" evidence="4">
    <location>
        <begin position="16"/>
        <end position="26"/>
    </location>
</feature>
<feature type="compositionally biased region" description="Basic and acidic residues" evidence="4">
    <location>
        <begin position="33"/>
        <end position="44"/>
    </location>
</feature>
<feature type="modified residue" description="N-acetylmethionine" evidence="2">
    <location>
        <position position="1"/>
    </location>
</feature>
<feature type="modified residue" description="Phosphoserine" evidence="2">
    <location>
        <position position="19"/>
    </location>
</feature>
<feature type="modified residue" description="Phosphotyrosine" evidence="2">
    <location>
        <position position="22"/>
    </location>
</feature>
<feature type="modified residue" description="Phosphotyrosine" evidence="2">
    <location>
        <position position="62"/>
    </location>
</feature>
<feature type="modified residue" description="Phosphotyrosine; by LYN" evidence="2">
    <location>
        <position position="72"/>
    </location>
</feature>
<feature type="modified residue" description="Phosphoserine" evidence="2">
    <location>
        <position position="81"/>
    </location>
</feature>